<gene>
    <name evidence="1" type="primary">trpD</name>
    <name type="ordered locus">XAC0480</name>
</gene>
<comment type="function">
    <text evidence="1">Catalyzes the transfer of the phosphoribosyl group of 5-phosphorylribose-1-pyrophosphate (PRPP) to anthranilate to yield N-(5'-phosphoribosyl)-anthranilate (PRA).</text>
</comment>
<comment type="catalytic activity">
    <reaction evidence="1">
        <text>N-(5-phospho-beta-D-ribosyl)anthranilate + diphosphate = 5-phospho-alpha-D-ribose 1-diphosphate + anthranilate</text>
        <dbReference type="Rhea" id="RHEA:11768"/>
        <dbReference type="ChEBI" id="CHEBI:16567"/>
        <dbReference type="ChEBI" id="CHEBI:18277"/>
        <dbReference type="ChEBI" id="CHEBI:33019"/>
        <dbReference type="ChEBI" id="CHEBI:58017"/>
        <dbReference type="EC" id="2.4.2.18"/>
    </reaction>
</comment>
<comment type="cofactor">
    <cofactor evidence="1">
        <name>Mg(2+)</name>
        <dbReference type="ChEBI" id="CHEBI:18420"/>
    </cofactor>
    <text evidence="1">Binds 2 magnesium ions per monomer.</text>
</comment>
<comment type="pathway">
    <text evidence="1">Amino-acid biosynthesis; L-tryptophan biosynthesis; L-tryptophan from chorismate: step 2/5.</text>
</comment>
<comment type="subunit">
    <text evidence="1">Homodimer.</text>
</comment>
<comment type="similarity">
    <text evidence="1">Belongs to the anthranilate phosphoribosyltransferase family.</text>
</comment>
<feature type="chain" id="PRO_0000154502" description="Anthranilate phosphoribosyltransferase">
    <location>
        <begin position="1"/>
        <end position="345"/>
    </location>
</feature>
<feature type="binding site" evidence="1">
    <location>
        <position position="84"/>
    </location>
    <ligand>
        <name>5-phospho-alpha-D-ribose 1-diphosphate</name>
        <dbReference type="ChEBI" id="CHEBI:58017"/>
    </ligand>
</feature>
<feature type="binding site" evidence="1">
    <location>
        <position position="84"/>
    </location>
    <ligand>
        <name>anthranilate</name>
        <dbReference type="ChEBI" id="CHEBI:16567"/>
        <label>1</label>
    </ligand>
</feature>
<feature type="binding site" evidence="1">
    <location>
        <begin position="87"/>
        <end position="88"/>
    </location>
    <ligand>
        <name>5-phospho-alpha-D-ribose 1-diphosphate</name>
        <dbReference type="ChEBI" id="CHEBI:58017"/>
    </ligand>
</feature>
<feature type="binding site" evidence="1">
    <location>
        <position position="92"/>
    </location>
    <ligand>
        <name>5-phospho-alpha-D-ribose 1-diphosphate</name>
        <dbReference type="ChEBI" id="CHEBI:58017"/>
    </ligand>
</feature>
<feature type="binding site" evidence="1">
    <location>
        <begin position="94"/>
        <end position="97"/>
    </location>
    <ligand>
        <name>5-phospho-alpha-D-ribose 1-diphosphate</name>
        <dbReference type="ChEBI" id="CHEBI:58017"/>
    </ligand>
</feature>
<feature type="binding site" evidence="1">
    <location>
        <position position="96"/>
    </location>
    <ligand>
        <name>Mg(2+)</name>
        <dbReference type="ChEBI" id="CHEBI:18420"/>
        <label>1</label>
    </ligand>
</feature>
<feature type="binding site" evidence="1">
    <location>
        <begin position="112"/>
        <end position="120"/>
    </location>
    <ligand>
        <name>5-phospho-alpha-D-ribose 1-diphosphate</name>
        <dbReference type="ChEBI" id="CHEBI:58017"/>
    </ligand>
</feature>
<feature type="binding site" evidence="1">
    <location>
        <position position="115"/>
    </location>
    <ligand>
        <name>anthranilate</name>
        <dbReference type="ChEBI" id="CHEBI:16567"/>
        <label>1</label>
    </ligand>
</feature>
<feature type="binding site" evidence="1">
    <location>
        <position position="124"/>
    </location>
    <ligand>
        <name>5-phospho-alpha-D-ribose 1-diphosphate</name>
        <dbReference type="ChEBI" id="CHEBI:58017"/>
    </ligand>
</feature>
<feature type="binding site" evidence="1">
    <location>
        <position position="170"/>
    </location>
    <ligand>
        <name>anthranilate</name>
        <dbReference type="ChEBI" id="CHEBI:16567"/>
        <label>2</label>
    </ligand>
</feature>
<feature type="binding site" evidence="1">
    <location>
        <position position="229"/>
    </location>
    <ligand>
        <name>Mg(2+)</name>
        <dbReference type="ChEBI" id="CHEBI:18420"/>
        <label>2</label>
    </ligand>
</feature>
<feature type="binding site" evidence="1">
    <location>
        <position position="230"/>
    </location>
    <ligand>
        <name>Mg(2+)</name>
        <dbReference type="ChEBI" id="CHEBI:18420"/>
        <label>1</label>
    </ligand>
</feature>
<feature type="binding site" evidence="1">
    <location>
        <position position="230"/>
    </location>
    <ligand>
        <name>Mg(2+)</name>
        <dbReference type="ChEBI" id="CHEBI:18420"/>
        <label>2</label>
    </ligand>
</feature>
<accession>Q8PQ48</accession>
<organism>
    <name type="scientific">Xanthomonas axonopodis pv. citri (strain 306)</name>
    <dbReference type="NCBI Taxonomy" id="190486"/>
    <lineage>
        <taxon>Bacteria</taxon>
        <taxon>Pseudomonadati</taxon>
        <taxon>Pseudomonadota</taxon>
        <taxon>Gammaproteobacteria</taxon>
        <taxon>Lysobacterales</taxon>
        <taxon>Lysobacteraceae</taxon>
        <taxon>Xanthomonas</taxon>
    </lineage>
</organism>
<keyword id="KW-0028">Amino-acid biosynthesis</keyword>
<keyword id="KW-0057">Aromatic amino acid biosynthesis</keyword>
<keyword id="KW-0328">Glycosyltransferase</keyword>
<keyword id="KW-0460">Magnesium</keyword>
<keyword id="KW-0479">Metal-binding</keyword>
<keyword id="KW-0808">Transferase</keyword>
<keyword id="KW-0822">Tryptophan biosynthesis</keyword>
<sequence length="345" mass="36639">MPITPQEALQRTIEHREIFHDEMVELMRQIMRGEVSDMMVAAILTGLRVKKETIGEIAGAATVMREFSRRVDVADRQHMVDIVGTGGDGSHTFNISTCAMFVAAAGGAKVAKHGNRSVSSKSGSADALEALGAVIELQPEQVASALAHTGIGFMYAPVHHPAMKVVAPVRREMGVRTIFNILGPLTNPAGSPNILMGVFHPDLVGIQARVLQELGAERALVVWGRDGMDELSLGAGTLVGELRDGQVREYEVHPEDFGIAMSASRNLKVADAAQSRAMLLQVLDNVPGPALDIVALNAGAALYVAGVADSIADGVLRARAVIADGSARARLDAYVVYTRQLAVQP</sequence>
<proteinExistence type="inferred from homology"/>
<name>TRPD_XANAC</name>
<evidence type="ECO:0000255" key="1">
    <source>
        <dbReference type="HAMAP-Rule" id="MF_00211"/>
    </source>
</evidence>
<protein>
    <recommendedName>
        <fullName evidence="1">Anthranilate phosphoribosyltransferase</fullName>
        <ecNumber evidence="1">2.4.2.18</ecNumber>
    </recommendedName>
</protein>
<reference key="1">
    <citation type="journal article" date="2002" name="Nature">
        <title>Comparison of the genomes of two Xanthomonas pathogens with differing host specificities.</title>
        <authorList>
            <person name="da Silva A.C.R."/>
            <person name="Ferro J.A."/>
            <person name="Reinach F.C."/>
            <person name="Farah C.S."/>
            <person name="Furlan L.R."/>
            <person name="Quaggio R.B."/>
            <person name="Monteiro-Vitorello C.B."/>
            <person name="Van Sluys M.A."/>
            <person name="Almeida N.F. Jr."/>
            <person name="Alves L.M.C."/>
            <person name="do Amaral A.M."/>
            <person name="Bertolini M.C."/>
            <person name="Camargo L.E.A."/>
            <person name="Camarotte G."/>
            <person name="Cannavan F."/>
            <person name="Cardozo J."/>
            <person name="Chambergo F."/>
            <person name="Ciapina L.P."/>
            <person name="Cicarelli R.M.B."/>
            <person name="Coutinho L.L."/>
            <person name="Cursino-Santos J.R."/>
            <person name="El-Dorry H."/>
            <person name="Faria J.B."/>
            <person name="Ferreira A.J.S."/>
            <person name="Ferreira R.C.C."/>
            <person name="Ferro M.I.T."/>
            <person name="Formighieri E.F."/>
            <person name="Franco M.C."/>
            <person name="Greggio C.C."/>
            <person name="Gruber A."/>
            <person name="Katsuyama A.M."/>
            <person name="Kishi L.T."/>
            <person name="Leite R.P."/>
            <person name="Lemos E.G.M."/>
            <person name="Lemos M.V.F."/>
            <person name="Locali E.C."/>
            <person name="Machado M.A."/>
            <person name="Madeira A.M.B.N."/>
            <person name="Martinez-Rossi N.M."/>
            <person name="Martins E.C."/>
            <person name="Meidanis J."/>
            <person name="Menck C.F.M."/>
            <person name="Miyaki C.Y."/>
            <person name="Moon D.H."/>
            <person name="Moreira L.M."/>
            <person name="Novo M.T.M."/>
            <person name="Okura V.K."/>
            <person name="Oliveira M.C."/>
            <person name="Oliveira V.R."/>
            <person name="Pereira H.A."/>
            <person name="Rossi A."/>
            <person name="Sena J.A.D."/>
            <person name="Silva C."/>
            <person name="de Souza R.F."/>
            <person name="Spinola L.A.F."/>
            <person name="Takita M.A."/>
            <person name="Tamura R.E."/>
            <person name="Teixeira E.C."/>
            <person name="Tezza R.I.D."/>
            <person name="Trindade dos Santos M."/>
            <person name="Truffi D."/>
            <person name="Tsai S.M."/>
            <person name="White F.F."/>
            <person name="Setubal J.C."/>
            <person name="Kitajima J.P."/>
        </authorList>
    </citation>
    <scope>NUCLEOTIDE SEQUENCE [LARGE SCALE GENOMIC DNA]</scope>
    <source>
        <strain>306</strain>
    </source>
</reference>
<dbReference type="EC" id="2.4.2.18" evidence="1"/>
<dbReference type="EMBL" id="AE008923">
    <property type="protein sequence ID" value="AAM35371.1"/>
    <property type="molecule type" value="Genomic_DNA"/>
</dbReference>
<dbReference type="RefSeq" id="WP_011050345.1">
    <property type="nucleotide sequence ID" value="NC_003919.1"/>
</dbReference>
<dbReference type="SMR" id="Q8PQ48"/>
<dbReference type="GeneID" id="66909686"/>
<dbReference type="KEGG" id="xac:XAC0480"/>
<dbReference type="eggNOG" id="COG0547">
    <property type="taxonomic scope" value="Bacteria"/>
</dbReference>
<dbReference type="HOGENOM" id="CLU_034315_2_1_6"/>
<dbReference type="UniPathway" id="UPA00035">
    <property type="reaction ID" value="UER00041"/>
</dbReference>
<dbReference type="Proteomes" id="UP000000576">
    <property type="component" value="Chromosome"/>
</dbReference>
<dbReference type="GO" id="GO:0005829">
    <property type="term" value="C:cytosol"/>
    <property type="evidence" value="ECO:0007669"/>
    <property type="project" value="TreeGrafter"/>
</dbReference>
<dbReference type="GO" id="GO:0004048">
    <property type="term" value="F:anthranilate phosphoribosyltransferase activity"/>
    <property type="evidence" value="ECO:0007669"/>
    <property type="project" value="UniProtKB-UniRule"/>
</dbReference>
<dbReference type="GO" id="GO:0000287">
    <property type="term" value="F:magnesium ion binding"/>
    <property type="evidence" value="ECO:0007669"/>
    <property type="project" value="UniProtKB-UniRule"/>
</dbReference>
<dbReference type="GO" id="GO:0000162">
    <property type="term" value="P:L-tryptophan biosynthetic process"/>
    <property type="evidence" value="ECO:0007669"/>
    <property type="project" value="UniProtKB-UniRule"/>
</dbReference>
<dbReference type="FunFam" id="1.20.970.10:FF:000006">
    <property type="entry name" value="Anthranilate phosphoribosyltransferase"/>
    <property type="match status" value="1"/>
</dbReference>
<dbReference type="FunFam" id="3.40.1030.10:FF:000002">
    <property type="entry name" value="Anthranilate phosphoribosyltransferase"/>
    <property type="match status" value="1"/>
</dbReference>
<dbReference type="Gene3D" id="3.40.1030.10">
    <property type="entry name" value="Nucleoside phosphorylase/phosphoribosyltransferase catalytic domain"/>
    <property type="match status" value="1"/>
</dbReference>
<dbReference type="Gene3D" id="1.20.970.10">
    <property type="entry name" value="Transferase, Pyrimidine Nucleoside Phosphorylase, Chain C"/>
    <property type="match status" value="1"/>
</dbReference>
<dbReference type="HAMAP" id="MF_00211">
    <property type="entry name" value="TrpD"/>
    <property type="match status" value="1"/>
</dbReference>
<dbReference type="InterPro" id="IPR005940">
    <property type="entry name" value="Anthranilate_Pribosyl_Tfrase"/>
</dbReference>
<dbReference type="InterPro" id="IPR000312">
    <property type="entry name" value="Glycosyl_Trfase_fam3"/>
</dbReference>
<dbReference type="InterPro" id="IPR017459">
    <property type="entry name" value="Glycosyl_Trfase_fam3_N_dom"/>
</dbReference>
<dbReference type="InterPro" id="IPR036320">
    <property type="entry name" value="Glycosyl_Trfase_fam3_N_dom_sf"/>
</dbReference>
<dbReference type="InterPro" id="IPR035902">
    <property type="entry name" value="Nuc_phospho_transferase"/>
</dbReference>
<dbReference type="NCBIfam" id="TIGR01245">
    <property type="entry name" value="trpD"/>
    <property type="match status" value="1"/>
</dbReference>
<dbReference type="PANTHER" id="PTHR43285">
    <property type="entry name" value="ANTHRANILATE PHOSPHORIBOSYLTRANSFERASE"/>
    <property type="match status" value="1"/>
</dbReference>
<dbReference type="PANTHER" id="PTHR43285:SF2">
    <property type="entry name" value="ANTHRANILATE PHOSPHORIBOSYLTRANSFERASE"/>
    <property type="match status" value="1"/>
</dbReference>
<dbReference type="Pfam" id="PF02885">
    <property type="entry name" value="Glycos_trans_3N"/>
    <property type="match status" value="1"/>
</dbReference>
<dbReference type="Pfam" id="PF00591">
    <property type="entry name" value="Glycos_transf_3"/>
    <property type="match status" value="1"/>
</dbReference>
<dbReference type="SUPFAM" id="SSF52418">
    <property type="entry name" value="Nucleoside phosphorylase/phosphoribosyltransferase catalytic domain"/>
    <property type="match status" value="1"/>
</dbReference>
<dbReference type="SUPFAM" id="SSF47648">
    <property type="entry name" value="Nucleoside phosphorylase/phosphoribosyltransferase N-terminal domain"/>
    <property type="match status" value="1"/>
</dbReference>